<gene>
    <name evidence="1" type="primary">ilvD</name>
    <name type="ordered locus">TM1040_2486</name>
</gene>
<proteinExistence type="inferred from homology"/>
<feature type="chain" id="PRO_1000001061" description="Dihydroxy-acid dehydratase">
    <location>
        <begin position="1"/>
        <end position="614"/>
    </location>
</feature>
<feature type="active site" description="Proton acceptor" evidence="1">
    <location>
        <position position="518"/>
    </location>
</feature>
<feature type="binding site" evidence="1">
    <location>
        <position position="81"/>
    </location>
    <ligand>
        <name>Mg(2+)</name>
        <dbReference type="ChEBI" id="CHEBI:18420"/>
    </ligand>
</feature>
<feature type="binding site" evidence="1">
    <location>
        <position position="122"/>
    </location>
    <ligand>
        <name>[2Fe-2S] cluster</name>
        <dbReference type="ChEBI" id="CHEBI:190135"/>
    </ligand>
</feature>
<feature type="binding site" evidence="1">
    <location>
        <position position="123"/>
    </location>
    <ligand>
        <name>Mg(2+)</name>
        <dbReference type="ChEBI" id="CHEBI:18420"/>
    </ligand>
</feature>
<feature type="binding site" description="via carbamate group" evidence="1">
    <location>
        <position position="124"/>
    </location>
    <ligand>
        <name>Mg(2+)</name>
        <dbReference type="ChEBI" id="CHEBI:18420"/>
    </ligand>
</feature>
<feature type="binding site" evidence="1">
    <location>
        <position position="196"/>
    </location>
    <ligand>
        <name>[2Fe-2S] cluster</name>
        <dbReference type="ChEBI" id="CHEBI:190135"/>
    </ligand>
</feature>
<feature type="binding site" evidence="1">
    <location>
        <position position="492"/>
    </location>
    <ligand>
        <name>Mg(2+)</name>
        <dbReference type="ChEBI" id="CHEBI:18420"/>
    </ligand>
</feature>
<feature type="modified residue" description="N6-carboxylysine" evidence="1">
    <location>
        <position position="124"/>
    </location>
</feature>
<accession>Q1GDP8</accession>
<sequence>MPMYRSRTSTHGRNMAGARGLWRATGMTESDFGKPIIAIVNSFTQFVPGHVHLKDLGQMVAREVESAGGVAKEFNTIAVDDGIAMGHDGMLYSLPSREVIADSVEYMVNAHCADAMVCISNCDKITPGMMMAAMRLNIPVIFVSGGPMEAGKIDIDSLDAKKIDLVDAMVAAASDKLTDEEVQHIEENACPTCGSCSGMFTANSMNCLAEALGLALPGNGSTLATHSDRKQLFLEAGRKIVEITKRHYEQNEKGLLPREIATFEAFENAMSLDIAMGGSTNTVLHLLAIAHEGKVDFTMQDIDRLSRKVPCLCKVAPNIENVHMEDVHRAGGIFSILGELSRAGLLHNDVPTVHSDSMGEAIAHWDIAVADNQAAKDLFKAAPGGVRTTQAFSQSNRFKDLDIDRKGGVIRSKEHAFSQDGGLAVLFGNIALDGCIVKTAGVDASILKFTGKAYVCESQDQAVNDILTGKVQAGDVVVIRYEGPRGGPGMQEMLYPTSYLKSKGLGKDCALLTDGRFSGGTSGLSIGHVSPEAAEGGTIGLVEHGDTIEIDIPNRSIHLAVDEATLAARRAAQDEKGWKPVAKRKRKVSTALKAYALLATSAAKGAVRQLPDDE</sequence>
<dbReference type="EC" id="4.2.1.9" evidence="1"/>
<dbReference type="EMBL" id="CP000377">
    <property type="protein sequence ID" value="ABF65218.1"/>
    <property type="molecule type" value="Genomic_DNA"/>
</dbReference>
<dbReference type="RefSeq" id="WP_011539805.1">
    <property type="nucleotide sequence ID" value="NC_008044.1"/>
</dbReference>
<dbReference type="SMR" id="Q1GDP8"/>
<dbReference type="STRING" id="292414.TM1040_2486"/>
<dbReference type="KEGG" id="sit:TM1040_2486"/>
<dbReference type="eggNOG" id="COG0129">
    <property type="taxonomic scope" value="Bacteria"/>
</dbReference>
<dbReference type="HOGENOM" id="CLU_014271_4_3_5"/>
<dbReference type="OrthoDB" id="9807077at2"/>
<dbReference type="UniPathway" id="UPA00047">
    <property type="reaction ID" value="UER00057"/>
</dbReference>
<dbReference type="UniPathway" id="UPA00049">
    <property type="reaction ID" value="UER00061"/>
</dbReference>
<dbReference type="Proteomes" id="UP000000636">
    <property type="component" value="Chromosome"/>
</dbReference>
<dbReference type="GO" id="GO:0005829">
    <property type="term" value="C:cytosol"/>
    <property type="evidence" value="ECO:0007669"/>
    <property type="project" value="TreeGrafter"/>
</dbReference>
<dbReference type="GO" id="GO:0051537">
    <property type="term" value="F:2 iron, 2 sulfur cluster binding"/>
    <property type="evidence" value="ECO:0007669"/>
    <property type="project" value="UniProtKB-UniRule"/>
</dbReference>
<dbReference type="GO" id="GO:0004160">
    <property type="term" value="F:dihydroxy-acid dehydratase activity"/>
    <property type="evidence" value="ECO:0007669"/>
    <property type="project" value="UniProtKB-UniRule"/>
</dbReference>
<dbReference type="GO" id="GO:0000287">
    <property type="term" value="F:magnesium ion binding"/>
    <property type="evidence" value="ECO:0007669"/>
    <property type="project" value="UniProtKB-UniRule"/>
</dbReference>
<dbReference type="GO" id="GO:0009097">
    <property type="term" value="P:isoleucine biosynthetic process"/>
    <property type="evidence" value="ECO:0007669"/>
    <property type="project" value="UniProtKB-UniRule"/>
</dbReference>
<dbReference type="GO" id="GO:0009099">
    <property type="term" value="P:L-valine biosynthetic process"/>
    <property type="evidence" value="ECO:0007669"/>
    <property type="project" value="UniProtKB-UniRule"/>
</dbReference>
<dbReference type="FunFam" id="3.50.30.80:FF:000001">
    <property type="entry name" value="Dihydroxy-acid dehydratase"/>
    <property type="match status" value="1"/>
</dbReference>
<dbReference type="Gene3D" id="3.50.30.80">
    <property type="entry name" value="IlvD/EDD C-terminal domain-like"/>
    <property type="match status" value="1"/>
</dbReference>
<dbReference type="HAMAP" id="MF_00012">
    <property type="entry name" value="IlvD"/>
    <property type="match status" value="1"/>
</dbReference>
<dbReference type="InterPro" id="IPR042096">
    <property type="entry name" value="Dihydro-acid_dehy_C"/>
</dbReference>
<dbReference type="InterPro" id="IPR004404">
    <property type="entry name" value="DihydroxyA_deHydtase"/>
</dbReference>
<dbReference type="InterPro" id="IPR020558">
    <property type="entry name" value="DiOHA_6PGluconate_deHydtase_CS"/>
</dbReference>
<dbReference type="InterPro" id="IPR056740">
    <property type="entry name" value="ILV_EDD_C"/>
</dbReference>
<dbReference type="InterPro" id="IPR000581">
    <property type="entry name" value="ILV_EDD_N"/>
</dbReference>
<dbReference type="InterPro" id="IPR037237">
    <property type="entry name" value="IlvD/EDD_N"/>
</dbReference>
<dbReference type="NCBIfam" id="TIGR00110">
    <property type="entry name" value="ilvD"/>
    <property type="match status" value="1"/>
</dbReference>
<dbReference type="NCBIfam" id="NF009103">
    <property type="entry name" value="PRK12448.1"/>
    <property type="match status" value="1"/>
</dbReference>
<dbReference type="PANTHER" id="PTHR43661">
    <property type="entry name" value="D-XYLONATE DEHYDRATASE"/>
    <property type="match status" value="1"/>
</dbReference>
<dbReference type="PANTHER" id="PTHR43661:SF3">
    <property type="entry name" value="D-XYLONATE DEHYDRATASE YAGF-RELATED"/>
    <property type="match status" value="1"/>
</dbReference>
<dbReference type="Pfam" id="PF24877">
    <property type="entry name" value="ILV_EDD_C"/>
    <property type="match status" value="1"/>
</dbReference>
<dbReference type="Pfam" id="PF00920">
    <property type="entry name" value="ILVD_EDD_N"/>
    <property type="match status" value="1"/>
</dbReference>
<dbReference type="SUPFAM" id="SSF143975">
    <property type="entry name" value="IlvD/EDD N-terminal domain-like"/>
    <property type="match status" value="1"/>
</dbReference>
<dbReference type="SUPFAM" id="SSF52016">
    <property type="entry name" value="LeuD/IlvD-like"/>
    <property type="match status" value="1"/>
</dbReference>
<dbReference type="PROSITE" id="PS00886">
    <property type="entry name" value="ILVD_EDD_1"/>
    <property type="match status" value="1"/>
</dbReference>
<dbReference type="PROSITE" id="PS00887">
    <property type="entry name" value="ILVD_EDD_2"/>
    <property type="match status" value="1"/>
</dbReference>
<organism>
    <name type="scientific">Ruegeria sp. (strain TM1040)</name>
    <name type="common">Silicibacter sp.</name>
    <dbReference type="NCBI Taxonomy" id="292414"/>
    <lineage>
        <taxon>Bacteria</taxon>
        <taxon>Pseudomonadati</taxon>
        <taxon>Pseudomonadota</taxon>
        <taxon>Alphaproteobacteria</taxon>
        <taxon>Rhodobacterales</taxon>
        <taxon>Roseobacteraceae</taxon>
        <taxon>Ruegeria</taxon>
    </lineage>
</organism>
<name>ILVD_RUEST</name>
<reference key="1">
    <citation type="submission" date="2006-05" db="EMBL/GenBank/DDBJ databases">
        <title>Complete sequence of chromosome of Silicibacter sp. TM1040.</title>
        <authorList>
            <consortium name="US DOE Joint Genome Institute"/>
            <person name="Copeland A."/>
            <person name="Lucas S."/>
            <person name="Lapidus A."/>
            <person name="Barry K."/>
            <person name="Detter J.C."/>
            <person name="Glavina del Rio T."/>
            <person name="Hammon N."/>
            <person name="Israni S."/>
            <person name="Dalin E."/>
            <person name="Tice H."/>
            <person name="Pitluck S."/>
            <person name="Brettin T."/>
            <person name="Bruce D."/>
            <person name="Han C."/>
            <person name="Tapia R."/>
            <person name="Goodwin L."/>
            <person name="Thompson L.S."/>
            <person name="Gilna P."/>
            <person name="Schmutz J."/>
            <person name="Larimer F."/>
            <person name="Land M."/>
            <person name="Hauser L."/>
            <person name="Kyrpides N."/>
            <person name="Kim E."/>
            <person name="Belas R."/>
            <person name="Moran M.A."/>
            <person name="Buchan A."/>
            <person name="Gonzalez J.M."/>
            <person name="Schell M.A."/>
            <person name="Sun F."/>
            <person name="Richardson P."/>
        </authorList>
    </citation>
    <scope>NUCLEOTIDE SEQUENCE [LARGE SCALE GENOMIC DNA]</scope>
    <source>
        <strain>TM1040</strain>
    </source>
</reference>
<evidence type="ECO:0000255" key="1">
    <source>
        <dbReference type="HAMAP-Rule" id="MF_00012"/>
    </source>
</evidence>
<comment type="function">
    <text evidence="1">Functions in the biosynthesis of branched-chain amino acids. Catalyzes the dehydration of (2R,3R)-2,3-dihydroxy-3-methylpentanoate (2,3-dihydroxy-3-methylvalerate) into 2-oxo-3-methylpentanoate (2-oxo-3-methylvalerate) and of (2R)-2,3-dihydroxy-3-methylbutanoate (2,3-dihydroxyisovalerate) into 2-oxo-3-methylbutanoate (2-oxoisovalerate), the penultimate precursor to L-isoleucine and L-valine, respectively.</text>
</comment>
<comment type="catalytic activity">
    <reaction evidence="1">
        <text>(2R)-2,3-dihydroxy-3-methylbutanoate = 3-methyl-2-oxobutanoate + H2O</text>
        <dbReference type="Rhea" id="RHEA:24809"/>
        <dbReference type="ChEBI" id="CHEBI:11851"/>
        <dbReference type="ChEBI" id="CHEBI:15377"/>
        <dbReference type="ChEBI" id="CHEBI:49072"/>
        <dbReference type="EC" id="4.2.1.9"/>
    </reaction>
    <physiologicalReaction direction="left-to-right" evidence="1">
        <dbReference type="Rhea" id="RHEA:24810"/>
    </physiologicalReaction>
</comment>
<comment type="catalytic activity">
    <reaction evidence="1">
        <text>(2R,3R)-2,3-dihydroxy-3-methylpentanoate = (S)-3-methyl-2-oxopentanoate + H2O</text>
        <dbReference type="Rhea" id="RHEA:27694"/>
        <dbReference type="ChEBI" id="CHEBI:15377"/>
        <dbReference type="ChEBI" id="CHEBI:35146"/>
        <dbReference type="ChEBI" id="CHEBI:49258"/>
        <dbReference type="EC" id="4.2.1.9"/>
    </reaction>
    <physiologicalReaction direction="left-to-right" evidence="1">
        <dbReference type="Rhea" id="RHEA:27695"/>
    </physiologicalReaction>
</comment>
<comment type="cofactor">
    <cofactor evidence="1">
        <name>[2Fe-2S] cluster</name>
        <dbReference type="ChEBI" id="CHEBI:190135"/>
    </cofactor>
    <text evidence="1">Binds 1 [2Fe-2S] cluster per subunit. This cluster acts as a Lewis acid cofactor.</text>
</comment>
<comment type="cofactor">
    <cofactor evidence="1">
        <name>Mg(2+)</name>
        <dbReference type="ChEBI" id="CHEBI:18420"/>
    </cofactor>
</comment>
<comment type="pathway">
    <text evidence="1">Amino-acid biosynthesis; L-isoleucine biosynthesis; L-isoleucine from 2-oxobutanoate: step 3/4.</text>
</comment>
<comment type="pathway">
    <text evidence="1">Amino-acid biosynthesis; L-valine biosynthesis; L-valine from pyruvate: step 3/4.</text>
</comment>
<comment type="subunit">
    <text evidence="1">Homodimer.</text>
</comment>
<comment type="similarity">
    <text evidence="1">Belongs to the IlvD/Edd family.</text>
</comment>
<protein>
    <recommendedName>
        <fullName evidence="1">Dihydroxy-acid dehydratase</fullName>
        <shortName evidence="1">DAD</shortName>
        <ecNumber evidence="1">4.2.1.9</ecNumber>
    </recommendedName>
</protein>
<keyword id="KW-0001">2Fe-2S</keyword>
<keyword id="KW-0028">Amino-acid biosynthesis</keyword>
<keyword id="KW-0100">Branched-chain amino acid biosynthesis</keyword>
<keyword id="KW-0408">Iron</keyword>
<keyword id="KW-0411">Iron-sulfur</keyword>
<keyword id="KW-0456">Lyase</keyword>
<keyword id="KW-0460">Magnesium</keyword>
<keyword id="KW-0479">Metal-binding</keyword>
<keyword id="KW-1185">Reference proteome</keyword>